<organism>
    <name type="scientific">Trichlorobacter lovleyi (strain ATCC BAA-1151 / DSM 17278 / SZ)</name>
    <name type="common">Geobacter lovleyi</name>
    <dbReference type="NCBI Taxonomy" id="398767"/>
    <lineage>
        <taxon>Bacteria</taxon>
        <taxon>Pseudomonadati</taxon>
        <taxon>Thermodesulfobacteriota</taxon>
        <taxon>Desulfuromonadia</taxon>
        <taxon>Geobacterales</taxon>
        <taxon>Geobacteraceae</taxon>
        <taxon>Trichlorobacter</taxon>
    </lineage>
</organism>
<sequence>MSAKEIRFNEEGRNAILRGVNALADAVKVTLGPKGRNVIIEKSFGSPLITKDGVSVAKEVELENKFENMGAQLVKEVASKTSDVAGDGTTTATVLAQAIYKQGSKLVAAGHNPMEIKRGIDKAVEAIVAELQKISKPIKDHKEIAQVGTISANNDKTIGDIIAEAMEKVGKEGVITVEEAKAMETSLETVEGMQFDRGYLSPYFVSDPERMEATLENATILIYDKKISNMKDMLPVLEQTAKSGRPLMIIAEDIEGEALATLVVNKLRGVLNVCAVKAPGFGDRRKAMLEDIAILTGGKVISEEMGFKLENTTMEMLGRAKRIVVDKDNTTIIDGDGSEADIQGRVKQIRAQIEDTTSDYDREKLQERLAKLVGGVAVIKVGAATETEMKEKKARVEDALHATRAAVDEGIVPGGGVAYIRALNALDSVVLPAEQQFGVTIIKSSLEAPIRQIADNAGIDASIVVDKVKNGKEAFGYNAADDTYVDMLEAGIIDPTKVSRCALQNASSVAGLMLTTECMIAEKPKKDSGMPAMPGGMGGMGGMGGMDY</sequence>
<name>CH60_TRIL1</name>
<reference key="1">
    <citation type="submission" date="2008-05" db="EMBL/GenBank/DDBJ databases">
        <title>Complete sequence of chromosome of Geobacter lovleyi SZ.</title>
        <authorList>
            <consortium name="US DOE Joint Genome Institute"/>
            <person name="Lucas S."/>
            <person name="Copeland A."/>
            <person name="Lapidus A."/>
            <person name="Glavina del Rio T."/>
            <person name="Dalin E."/>
            <person name="Tice H."/>
            <person name="Bruce D."/>
            <person name="Goodwin L."/>
            <person name="Pitluck S."/>
            <person name="Chertkov O."/>
            <person name="Meincke L."/>
            <person name="Brettin T."/>
            <person name="Detter J.C."/>
            <person name="Han C."/>
            <person name="Tapia R."/>
            <person name="Kuske C.R."/>
            <person name="Schmutz J."/>
            <person name="Larimer F."/>
            <person name="Land M."/>
            <person name="Hauser L."/>
            <person name="Kyrpides N."/>
            <person name="Mikhailova N."/>
            <person name="Sung Y."/>
            <person name="Fletcher K.E."/>
            <person name="Ritalahti K.M."/>
            <person name="Loeffler F.E."/>
            <person name="Richardson P."/>
        </authorList>
    </citation>
    <scope>NUCLEOTIDE SEQUENCE [LARGE SCALE GENOMIC DNA]</scope>
    <source>
        <strain>ATCC BAA-1151 / DSM 17278 / SZ</strain>
    </source>
</reference>
<evidence type="ECO:0000255" key="1">
    <source>
        <dbReference type="HAMAP-Rule" id="MF_00600"/>
    </source>
</evidence>
<accession>B3E8G0</accession>
<gene>
    <name evidence="1" type="primary">groEL</name>
    <name evidence="1" type="synonym">groL</name>
    <name type="ordered locus">Glov_2929</name>
</gene>
<keyword id="KW-0067">ATP-binding</keyword>
<keyword id="KW-0143">Chaperone</keyword>
<keyword id="KW-0963">Cytoplasm</keyword>
<keyword id="KW-0413">Isomerase</keyword>
<keyword id="KW-0547">Nucleotide-binding</keyword>
<keyword id="KW-1185">Reference proteome</keyword>
<protein>
    <recommendedName>
        <fullName evidence="1">Chaperonin GroEL</fullName>
        <ecNumber evidence="1">5.6.1.7</ecNumber>
    </recommendedName>
    <alternativeName>
        <fullName evidence="1">60 kDa chaperonin</fullName>
    </alternativeName>
    <alternativeName>
        <fullName evidence="1">Chaperonin-60</fullName>
        <shortName evidence="1">Cpn60</shortName>
    </alternativeName>
</protein>
<feature type="chain" id="PRO_1000130021" description="Chaperonin GroEL">
    <location>
        <begin position="1"/>
        <end position="548"/>
    </location>
</feature>
<feature type="binding site" evidence="1">
    <location>
        <begin position="30"/>
        <end position="33"/>
    </location>
    <ligand>
        <name>ATP</name>
        <dbReference type="ChEBI" id="CHEBI:30616"/>
    </ligand>
</feature>
<feature type="binding site" evidence="1">
    <location>
        <position position="51"/>
    </location>
    <ligand>
        <name>ATP</name>
        <dbReference type="ChEBI" id="CHEBI:30616"/>
    </ligand>
</feature>
<feature type="binding site" evidence="1">
    <location>
        <begin position="87"/>
        <end position="91"/>
    </location>
    <ligand>
        <name>ATP</name>
        <dbReference type="ChEBI" id="CHEBI:30616"/>
    </ligand>
</feature>
<feature type="binding site" evidence="1">
    <location>
        <position position="415"/>
    </location>
    <ligand>
        <name>ATP</name>
        <dbReference type="ChEBI" id="CHEBI:30616"/>
    </ligand>
</feature>
<feature type="binding site" evidence="1">
    <location>
        <begin position="478"/>
        <end position="480"/>
    </location>
    <ligand>
        <name>ATP</name>
        <dbReference type="ChEBI" id="CHEBI:30616"/>
    </ligand>
</feature>
<feature type="binding site" evidence="1">
    <location>
        <position position="494"/>
    </location>
    <ligand>
        <name>ATP</name>
        <dbReference type="ChEBI" id="CHEBI:30616"/>
    </ligand>
</feature>
<comment type="function">
    <text evidence="1">Together with its co-chaperonin GroES, plays an essential role in assisting protein folding. The GroEL-GroES system forms a nano-cage that allows encapsulation of the non-native substrate proteins and provides a physical environment optimized to promote and accelerate protein folding.</text>
</comment>
<comment type="catalytic activity">
    <reaction evidence="1">
        <text>ATP + H2O + a folded polypeptide = ADP + phosphate + an unfolded polypeptide.</text>
        <dbReference type="EC" id="5.6.1.7"/>
    </reaction>
</comment>
<comment type="subunit">
    <text evidence="1">Forms a cylinder of 14 subunits composed of two heptameric rings stacked back-to-back. Interacts with the co-chaperonin GroES.</text>
</comment>
<comment type="subcellular location">
    <subcellularLocation>
        <location evidence="1">Cytoplasm</location>
    </subcellularLocation>
</comment>
<comment type="similarity">
    <text evidence="1">Belongs to the chaperonin (HSP60) family.</text>
</comment>
<dbReference type="EC" id="5.6.1.7" evidence="1"/>
<dbReference type="EMBL" id="CP001089">
    <property type="protein sequence ID" value="ACD96636.1"/>
    <property type="molecule type" value="Genomic_DNA"/>
</dbReference>
<dbReference type="RefSeq" id="WP_012470961.1">
    <property type="nucleotide sequence ID" value="NC_010814.1"/>
</dbReference>
<dbReference type="SMR" id="B3E8G0"/>
<dbReference type="STRING" id="398767.Glov_2929"/>
<dbReference type="KEGG" id="glo:Glov_2929"/>
<dbReference type="eggNOG" id="COG0459">
    <property type="taxonomic scope" value="Bacteria"/>
</dbReference>
<dbReference type="HOGENOM" id="CLU_016503_3_0_7"/>
<dbReference type="OrthoDB" id="9766614at2"/>
<dbReference type="Proteomes" id="UP000002420">
    <property type="component" value="Chromosome"/>
</dbReference>
<dbReference type="GO" id="GO:0005737">
    <property type="term" value="C:cytoplasm"/>
    <property type="evidence" value="ECO:0007669"/>
    <property type="project" value="UniProtKB-SubCell"/>
</dbReference>
<dbReference type="GO" id="GO:0005524">
    <property type="term" value="F:ATP binding"/>
    <property type="evidence" value="ECO:0007669"/>
    <property type="project" value="UniProtKB-UniRule"/>
</dbReference>
<dbReference type="GO" id="GO:0140662">
    <property type="term" value="F:ATP-dependent protein folding chaperone"/>
    <property type="evidence" value="ECO:0007669"/>
    <property type="project" value="InterPro"/>
</dbReference>
<dbReference type="GO" id="GO:0016853">
    <property type="term" value="F:isomerase activity"/>
    <property type="evidence" value="ECO:0007669"/>
    <property type="project" value="UniProtKB-KW"/>
</dbReference>
<dbReference type="GO" id="GO:0051082">
    <property type="term" value="F:unfolded protein binding"/>
    <property type="evidence" value="ECO:0007669"/>
    <property type="project" value="UniProtKB-UniRule"/>
</dbReference>
<dbReference type="GO" id="GO:0042026">
    <property type="term" value="P:protein refolding"/>
    <property type="evidence" value="ECO:0007669"/>
    <property type="project" value="UniProtKB-UniRule"/>
</dbReference>
<dbReference type="CDD" id="cd03344">
    <property type="entry name" value="GroEL"/>
    <property type="match status" value="1"/>
</dbReference>
<dbReference type="FunFam" id="1.10.560.10:FF:000001">
    <property type="entry name" value="60 kDa chaperonin"/>
    <property type="match status" value="1"/>
</dbReference>
<dbReference type="FunFam" id="3.50.7.10:FF:000001">
    <property type="entry name" value="60 kDa chaperonin"/>
    <property type="match status" value="1"/>
</dbReference>
<dbReference type="Gene3D" id="3.50.7.10">
    <property type="entry name" value="GroEL"/>
    <property type="match status" value="1"/>
</dbReference>
<dbReference type="Gene3D" id="1.10.560.10">
    <property type="entry name" value="GroEL-like equatorial domain"/>
    <property type="match status" value="1"/>
</dbReference>
<dbReference type="Gene3D" id="3.30.260.10">
    <property type="entry name" value="TCP-1-like chaperonin intermediate domain"/>
    <property type="match status" value="1"/>
</dbReference>
<dbReference type="HAMAP" id="MF_00600">
    <property type="entry name" value="CH60"/>
    <property type="match status" value="1"/>
</dbReference>
<dbReference type="InterPro" id="IPR018370">
    <property type="entry name" value="Chaperonin_Cpn60_CS"/>
</dbReference>
<dbReference type="InterPro" id="IPR001844">
    <property type="entry name" value="Cpn60/GroEL"/>
</dbReference>
<dbReference type="InterPro" id="IPR002423">
    <property type="entry name" value="Cpn60/GroEL/TCP-1"/>
</dbReference>
<dbReference type="InterPro" id="IPR027409">
    <property type="entry name" value="GroEL-like_apical_dom_sf"/>
</dbReference>
<dbReference type="InterPro" id="IPR027413">
    <property type="entry name" value="GROEL-like_equatorial_sf"/>
</dbReference>
<dbReference type="InterPro" id="IPR027410">
    <property type="entry name" value="TCP-1-like_intermed_sf"/>
</dbReference>
<dbReference type="NCBIfam" id="TIGR02348">
    <property type="entry name" value="GroEL"/>
    <property type="match status" value="1"/>
</dbReference>
<dbReference type="NCBIfam" id="NF000592">
    <property type="entry name" value="PRK00013.1"/>
    <property type="match status" value="1"/>
</dbReference>
<dbReference type="NCBIfam" id="NF009487">
    <property type="entry name" value="PRK12849.1"/>
    <property type="match status" value="1"/>
</dbReference>
<dbReference type="NCBIfam" id="NF009488">
    <property type="entry name" value="PRK12850.1"/>
    <property type="match status" value="1"/>
</dbReference>
<dbReference type="NCBIfam" id="NF009489">
    <property type="entry name" value="PRK12851.1"/>
    <property type="match status" value="1"/>
</dbReference>
<dbReference type="PANTHER" id="PTHR45633">
    <property type="entry name" value="60 KDA HEAT SHOCK PROTEIN, MITOCHONDRIAL"/>
    <property type="match status" value="1"/>
</dbReference>
<dbReference type="Pfam" id="PF00118">
    <property type="entry name" value="Cpn60_TCP1"/>
    <property type="match status" value="1"/>
</dbReference>
<dbReference type="PRINTS" id="PR00298">
    <property type="entry name" value="CHAPERONIN60"/>
</dbReference>
<dbReference type="SUPFAM" id="SSF52029">
    <property type="entry name" value="GroEL apical domain-like"/>
    <property type="match status" value="1"/>
</dbReference>
<dbReference type="SUPFAM" id="SSF48592">
    <property type="entry name" value="GroEL equatorial domain-like"/>
    <property type="match status" value="1"/>
</dbReference>
<dbReference type="SUPFAM" id="SSF54849">
    <property type="entry name" value="GroEL-intermediate domain like"/>
    <property type="match status" value="1"/>
</dbReference>
<dbReference type="PROSITE" id="PS00296">
    <property type="entry name" value="CHAPERONINS_CPN60"/>
    <property type="match status" value="1"/>
</dbReference>
<proteinExistence type="inferred from homology"/>